<evidence type="ECO:0000255" key="1"/>
<evidence type="ECO:0000255" key="2">
    <source>
        <dbReference type="PROSITE-ProRule" id="PRU00114"/>
    </source>
</evidence>
<evidence type="ECO:0000303" key="3">
    <source>
    </source>
</evidence>
<evidence type="ECO:0000303" key="4">
    <source>
    </source>
</evidence>
<evidence type="ECO:0000303" key="5">
    <source>
    </source>
</evidence>
<evidence type="ECO:0000303" key="6">
    <source>
    </source>
</evidence>
<evidence type="ECO:0000303" key="7">
    <source>
    </source>
</evidence>
<evidence type="ECO:0000303" key="8">
    <source ref="2"/>
</evidence>
<evidence type="ECO:0000305" key="9"/>
<dbReference type="EMBL" id="AC244472">
    <property type="status" value="NOT_ANNOTATED_CDS"/>
    <property type="molecule type" value="Genomic_DNA"/>
</dbReference>
<dbReference type="SMR" id="A0A075B6N2"/>
<dbReference type="FunCoup" id="A0A075B6N2">
    <property type="interactions" value="383"/>
</dbReference>
<dbReference type="IMGT_GENE-DB" id="TRBV20-1"/>
<dbReference type="BioMuta" id="TRBV20-1"/>
<dbReference type="Ensembl" id="ENST00000390394.3">
    <property type="protein sequence ID" value="ENSP00000374917.3"/>
    <property type="gene ID" value="ENSG00000211747.3"/>
</dbReference>
<dbReference type="UCSC" id="uc064ist.1">
    <property type="organism name" value="human"/>
</dbReference>
<dbReference type="AGR" id="HGNC:12196"/>
<dbReference type="GeneCards" id="TRBV20-1"/>
<dbReference type="HGNC" id="HGNC:12196">
    <property type="gene designation" value="TRBV20-1"/>
</dbReference>
<dbReference type="HPA" id="ENSG00000211747">
    <property type="expression patterns" value="Tissue enriched (lymphoid)"/>
</dbReference>
<dbReference type="neXtProt" id="NX_A0A075B6N2"/>
<dbReference type="OpenTargets" id="ENSG00000211747"/>
<dbReference type="VEuPathDB" id="HostDB:ENSG00000211747"/>
<dbReference type="GeneTree" id="ENSGT00530000064313"/>
<dbReference type="HOGENOM" id="CLU_077975_4_2_1"/>
<dbReference type="InParanoid" id="A0A075B6N2"/>
<dbReference type="OMA" id="PRRTICK"/>
<dbReference type="OrthoDB" id="9809161at2759"/>
<dbReference type="PAN-GO" id="A0A075B6N2">
    <property type="GO annotations" value="2 GO annotations based on evolutionary models"/>
</dbReference>
<dbReference type="PhylomeDB" id="A0A075B6N2"/>
<dbReference type="SignaLink" id="A0A075B6N2"/>
<dbReference type="ChiTaRS" id="TRBV20-1">
    <property type="organism name" value="human"/>
</dbReference>
<dbReference type="Pharos" id="A0A075B6N2">
    <property type="development level" value="Tdark"/>
</dbReference>
<dbReference type="PRO" id="PR:A0A075B6N2"/>
<dbReference type="Proteomes" id="UP000005640">
    <property type="component" value="Chromosome 7"/>
</dbReference>
<dbReference type="RNAct" id="A0A075B6N2">
    <property type="molecule type" value="protein"/>
</dbReference>
<dbReference type="Bgee" id="ENSG00000211747">
    <property type="expression patterns" value="Expressed in lymph node and 90 other cell types or tissues"/>
</dbReference>
<dbReference type="GO" id="GO:0005886">
    <property type="term" value="C:plasma membrane"/>
    <property type="evidence" value="ECO:0000318"/>
    <property type="project" value="GO_Central"/>
</dbReference>
<dbReference type="GO" id="GO:0042101">
    <property type="term" value="C:T cell receptor complex"/>
    <property type="evidence" value="ECO:0007669"/>
    <property type="project" value="UniProtKB-KW"/>
</dbReference>
<dbReference type="GO" id="GO:0002250">
    <property type="term" value="P:adaptive immune response"/>
    <property type="evidence" value="ECO:0007669"/>
    <property type="project" value="UniProtKB-KW"/>
</dbReference>
<dbReference type="GO" id="GO:0007166">
    <property type="term" value="P:cell surface receptor signaling pathway"/>
    <property type="evidence" value="ECO:0000318"/>
    <property type="project" value="GO_Central"/>
</dbReference>
<dbReference type="Gene3D" id="2.60.40.10">
    <property type="entry name" value="Immunoglobulins"/>
    <property type="match status" value="1"/>
</dbReference>
<dbReference type="InterPro" id="IPR007110">
    <property type="entry name" value="Ig-like_dom"/>
</dbReference>
<dbReference type="InterPro" id="IPR036179">
    <property type="entry name" value="Ig-like_dom_sf"/>
</dbReference>
<dbReference type="InterPro" id="IPR013783">
    <property type="entry name" value="Ig-like_fold"/>
</dbReference>
<dbReference type="InterPro" id="IPR013106">
    <property type="entry name" value="Ig_V-set"/>
</dbReference>
<dbReference type="InterPro" id="IPR050413">
    <property type="entry name" value="TCR_beta_variable"/>
</dbReference>
<dbReference type="PANTHER" id="PTHR23268:SF11">
    <property type="entry name" value="T CELL RECEPTOR BETA VARIABLE 20-1"/>
    <property type="match status" value="1"/>
</dbReference>
<dbReference type="PANTHER" id="PTHR23268">
    <property type="entry name" value="T-CELL RECEPTOR BETA CHAIN"/>
    <property type="match status" value="1"/>
</dbReference>
<dbReference type="Pfam" id="PF07686">
    <property type="entry name" value="V-set"/>
    <property type="match status" value="1"/>
</dbReference>
<dbReference type="SMART" id="SM00406">
    <property type="entry name" value="IGv"/>
    <property type="match status" value="1"/>
</dbReference>
<dbReference type="SUPFAM" id="SSF48726">
    <property type="entry name" value="Immunoglobulin"/>
    <property type="match status" value="1"/>
</dbReference>
<dbReference type="PROSITE" id="PS50835">
    <property type="entry name" value="IG_LIKE"/>
    <property type="match status" value="1"/>
</dbReference>
<name>TVBT1_HUMAN</name>
<protein>
    <recommendedName>
        <fullName evidence="8">T cell receptor beta variable 20-1</fullName>
    </recommendedName>
</protein>
<proteinExistence type="evidence at protein level"/>
<accession>A0A075B6N2</accession>
<feature type="signal peptide" evidence="1">
    <location>
        <begin position="1"/>
        <end position="15"/>
    </location>
</feature>
<feature type="chain" id="PRO_5012723331" description="T cell receptor beta variable 20-1" evidence="1">
    <location>
        <begin position="16"/>
        <end position="111"/>
    </location>
</feature>
<feature type="domain" description="Ig-like" evidence="2">
    <location>
        <begin position="16"/>
        <end position="111" status="greater than"/>
    </location>
</feature>
<feature type="disulfide bond" evidence="2">
    <location>
        <begin position="37"/>
        <end position="108"/>
    </location>
</feature>
<feature type="non-terminal residue">
    <location>
        <position position="111"/>
    </location>
</feature>
<sequence>MLLLLLLLGPGSGLGAVVSQHPSRVICKSGTSVKIECRSLDFQATTMFWYRQFPKQSLMLMATSNEGSKATYEQGVEKDKFLINHASLTLSTLTVTSAHPEDSSFYICSAR</sequence>
<comment type="function">
    <text evidence="3 5 6 7">V region of the variable domain of T cell receptor (TR) beta chain that participates in the antigen recognition (PubMed:24600447). Alpha-beta T cell receptors are antigen specific receptors which are essential to the immune response and are present on the cell surface of T lymphocytes. Recognize peptide-major histocompatibility (MH) (pMH) complexes that are displayed by antigen presenting cells (APC), a prerequisite for efficient T cell adaptive immunity against pathogens (PubMed:25493333). Binding of alpha-beta TR to pMH complex initiates TR-CD3 clustering on the cell surface and intracellular activation of LCK that phosphorylates the ITAM motifs of CD3G, CD3D, CD3E and CD247 enabling the recruitment of ZAP70. In turn ZAP70 phosphorylates LAT, which recruits numerous signaling molecules to form the LAT signalosome. The LAT signalosome propagates signal branching to three major signaling pathways, the calcium, the mitogen-activated protein kinase (MAPK) kinase and the nuclear factor NF-kappa-B (NF-kB) pathways, leading to the mobilization of transcription factors that are critical for gene expression and essential for T cell growth and differentiation (PubMed:23524462). The T cell repertoire is generated in the thymus, by V-(D)-J rearrangement. This repertoire is then shaped by intrathymic selection events to generate a peripheral T cell pool of self-MH restricted, non-autoaggressive T cells. Post-thymic interaction of alpha-beta TR with the pMH complexes shapes TR structural and functional avidity (PubMed:15040585).</text>
</comment>
<comment type="subunit">
    <text evidence="4">Alpha-beta TR is a heterodimer composed of an alpha and beta chain; disulfide-linked. The alpha-beta TR is associated with the transmembrane signaling CD3 coreceptor proteins to form the TR-CD3 (TcR or TCR). The assembly of alpha-beta TR heterodimers with CD3 occurs in the endoplasmic reticulum where a single alpha-beta TR heterodimer associates with one CD3D-CD3E heterodimer, one CD3G-CD3E heterodimer and one CD247 homodimer forming a stable octameric structure. CD3D-CD3E and CD3G-CD3E heterodimers preferentially associate with TR alpha and TR beta chains, respectively. The association of the CD247 homodimer is the last step of TcR assembly in the endoplasmic reticulum and is required for transport to the cell surface.</text>
</comment>
<comment type="subcellular location">
    <subcellularLocation>
        <location evidence="4">Cell membrane</location>
    </subcellularLocation>
</comment>
<comment type="polymorphism">
    <text evidence="9">There are several alleles. The sequence shown is that of IMGT allele TRBV20-1*01.</text>
</comment>
<organism>
    <name type="scientific">Homo sapiens</name>
    <name type="common">Human</name>
    <dbReference type="NCBI Taxonomy" id="9606"/>
    <lineage>
        <taxon>Eukaryota</taxon>
        <taxon>Metazoa</taxon>
        <taxon>Chordata</taxon>
        <taxon>Craniata</taxon>
        <taxon>Vertebrata</taxon>
        <taxon>Euteleostomi</taxon>
        <taxon>Mammalia</taxon>
        <taxon>Eutheria</taxon>
        <taxon>Euarchontoglires</taxon>
        <taxon>Primates</taxon>
        <taxon>Haplorrhini</taxon>
        <taxon>Catarrhini</taxon>
        <taxon>Hominidae</taxon>
        <taxon>Homo</taxon>
    </lineage>
</organism>
<gene>
    <name evidence="8" type="primary">TRBV20-1</name>
</gene>
<keyword id="KW-1064">Adaptive immunity</keyword>
<keyword id="KW-1003">Cell membrane</keyword>
<keyword id="KW-1015">Disulfide bond</keyword>
<keyword id="KW-0391">Immunity</keyword>
<keyword id="KW-0393">Immunoglobulin domain</keyword>
<keyword id="KW-0472">Membrane</keyword>
<keyword id="KW-1267">Proteomics identification</keyword>
<keyword id="KW-0675">Receptor</keyword>
<keyword id="KW-1185">Reference proteome</keyword>
<keyword id="KW-0732">Signal</keyword>
<keyword id="KW-1279">T cell receptor</keyword>
<reference key="1">
    <citation type="journal article" date="2003" name="Nature">
        <title>The DNA sequence of human chromosome 7.</title>
        <authorList>
            <person name="Hillier L.W."/>
            <person name="Fulton R.S."/>
            <person name="Fulton L.A."/>
            <person name="Graves T.A."/>
            <person name="Pepin K.H."/>
            <person name="Wagner-McPherson C."/>
            <person name="Layman D."/>
            <person name="Maas J."/>
            <person name="Jaeger S."/>
            <person name="Walker R."/>
            <person name="Wylie K."/>
            <person name="Sekhon M."/>
            <person name="Becker M.C."/>
            <person name="O'Laughlin M.D."/>
            <person name="Schaller M.E."/>
            <person name="Fewell G.A."/>
            <person name="Delehaunty K.D."/>
            <person name="Miner T.L."/>
            <person name="Nash W.E."/>
            <person name="Cordes M."/>
            <person name="Du H."/>
            <person name="Sun H."/>
            <person name="Edwards J."/>
            <person name="Bradshaw-Cordum H."/>
            <person name="Ali J."/>
            <person name="Andrews S."/>
            <person name="Isak A."/>
            <person name="Vanbrunt A."/>
            <person name="Nguyen C."/>
            <person name="Du F."/>
            <person name="Lamar B."/>
            <person name="Courtney L."/>
            <person name="Kalicki J."/>
            <person name="Ozersky P."/>
            <person name="Bielicki L."/>
            <person name="Scott K."/>
            <person name="Holmes A."/>
            <person name="Harkins R."/>
            <person name="Harris A."/>
            <person name="Strong C.M."/>
            <person name="Hou S."/>
            <person name="Tomlinson C."/>
            <person name="Dauphin-Kohlberg S."/>
            <person name="Kozlowicz-Reilly A."/>
            <person name="Leonard S."/>
            <person name="Rohlfing T."/>
            <person name="Rock S.M."/>
            <person name="Tin-Wollam A.-M."/>
            <person name="Abbott A."/>
            <person name="Minx P."/>
            <person name="Maupin R."/>
            <person name="Strowmatt C."/>
            <person name="Latreille P."/>
            <person name="Miller N."/>
            <person name="Johnson D."/>
            <person name="Murray J."/>
            <person name="Woessner J.P."/>
            <person name="Wendl M.C."/>
            <person name="Yang S.-P."/>
            <person name="Schultz B.R."/>
            <person name="Wallis J.W."/>
            <person name="Spieth J."/>
            <person name="Bieri T.A."/>
            <person name="Nelson J.O."/>
            <person name="Berkowicz N."/>
            <person name="Wohldmann P.E."/>
            <person name="Cook L.L."/>
            <person name="Hickenbotham M.T."/>
            <person name="Eldred J."/>
            <person name="Williams D."/>
            <person name="Bedell J.A."/>
            <person name="Mardis E.R."/>
            <person name="Clifton S.W."/>
            <person name="Chissoe S.L."/>
            <person name="Marra M.A."/>
            <person name="Raymond C."/>
            <person name="Haugen E."/>
            <person name="Gillett W."/>
            <person name="Zhou Y."/>
            <person name="James R."/>
            <person name="Phelps K."/>
            <person name="Iadanoto S."/>
            <person name="Bubb K."/>
            <person name="Simms E."/>
            <person name="Levy R."/>
            <person name="Clendenning J."/>
            <person name="Kaul R."/>
            <person name="Kent W.J."/>
            <person name="Furey T.S."/>
            <person name="Baertsch R.A."/>
            <person name="Brent M.R."/>
            <person name="Keibler E."/>
            <person name="Flicek P."/>
            <person name="Bork P."/>
            <person name="Suyama M."/>
            <person name="Bailey J.A."/>
            <person name="Portnoy M.E."/>
            <person name="Torrents D."/>
            <person name="Chinwalla A.T."/>
            <person name="Gish W.R."/>
            <person name="Eddy S.R."/>
            <person name="McPherson J.D."/>
            <person name="Olson M.V."/>
            <person name="Eichler E.E."/>
            <person name="Green E.D."/>
            <person name="Waterston R.H."/>
            <person name="Wilson R.K."/>
        </authorList>
    </citation>
    <scope>NUCLEOTIDE SEQUENCE [LARGE SCALE GENOMIC DNA] (IMGT ALLELE TRBV20-1*01)</scope>
</reference>
<reference key="2">
    <citation type="book" date="2001" name="The T Cell Receptor FactsBook.">
        <title>The T Cell Receptor FactsBook.</title>
        <editorList>
            <person name="Lefranc M.P."/>
            <person name="Lefranc G."/>
        </editorList>
        <authorList>
            <person name="Lefranc M.P."/>
            <person name="Lefranc G."/>
        </authorList>
    </citation>
    <scope>NOMENCLATURE</scope>
</reference>
<reference key="3">
    <citation type="journal article" date="2004" name="Nat. Rev. Immunol.">
        <title>The many important facets of T-cell repertoire diversity.</title>
        <authorList>
            <person name="Nikolich-Zugich J."/>
            <person name="Slifka M.K."/>
            <person name="Messaoudi I."/>
        </authorList>
    </citation>
    <scope>REVIEW ON T CELL REPERTOIRE DIVERSITY</scope>
</reference>
<reference key="4">
    <citation type="journal article" date="2010" name="Cold Spring Harb. Perspect. Biol.">
        <title>Structural biology of the T-cell receptor: insights into receptor assembly, ligand recognition, and initiation of signaling.</title>
        <authorList>
            <person name="Wucherpfennig K.W."/>
            <person name="Gagnon E."/>
            <person name="Call M.J."/>
            <person name="Huseby E.S."/>
            <person name="Call M.E."/>
        </authorList>
    </citation>
    <scope>REVIEW ON T CELL RECEPTOR-CD3 COMPLEX ASSEMBLY</scope>
    <scope>SUBCELLULAR LOCATION</scope>
</reference>
<reference key="5">
    <citation type="journal article" date="2013" name="Nat. Rev. Immunol.">
        <title>T cell receptor signalling networks: branched, diversified and bounded.</title>
        <authorList>
            <person name="Brownlie R.J."/>
            <person name="Zamoyska R."/>
        </authorList>
    </citation>
    <scope>REVIEW ON T CELL RECEPTOR SIGNALING</scope>
</reference>
<reference key="6">
    <citation type="journal article" date="2014" name="Front. Immunol.">
        <title>Immunoglobulin and T Cell Receptor Genes: IMGT((R)) and the Birth and Rise of Immunoinformatics.</title>
        <authorList>
            <person name="Lefranc M.P."/>
        </authorList>
    </citation>
    <scope>NOMENCLATURE</scope>
</reference>
<reference key="7">
    <citation type="journal article" date="2015" name="Annu. Rev. Immunol.">
        <title>T cell antigen receptor recognition of antigen-presenting molecules.</title>
        <authorList>
            <person name="Rossjohn J."/>
            <person name="Gras S."/>
            <person name="Miles J.J."/>
            <person name="Turner S.J."/>
            <person name="Godfrey D.I."/>
            <person name="McCluskey J."/>
        </authorList>
    </citation>
    <scope>REVIEW ON FUNCTION</scope>
</reference>